<organism>
    <name type="scientific">Escherichia coli O17:K52:H18 (strain UMN026 / ExPEC)</name>
    <dbReference type="NCBI Taxonomy" id="585056"/>
    <lineage>
        <taxon>Bacteria</taxon>
        <taxon>Pseudomonadati</taxon>
        <taxon>Pseudomonadota</taxon>
        <taxon>Gammaproteobacteria</taxon>
        <taxon>Enterobacterales</taxon>
        <taxon>Enterobacteriaceae</taxon>
        <taxon>Escherichia</taxon>
    </lineage>
</organism>
<keyword id="KW-0285">Flavoprotein</keyword>
<keyword id="KW-0288">FMN</keyword>
<keyword id="KW-0560">Oxidoreductase</keyword>
<keyword id="KW-0664">Pyridoxine biosynthesis</keyword>
<feature type="chain" id="PRO_1000186312" description="Pyridoxine/pyridoxamine 5'-phosphate oxidase">
    <location>
        <begin position="1"/>
        <end position="218"/>
    </location>
</feature>
<feature type="binding site" evidence="1">
    <location>
        <begin position="14"/>
        <end position="17"/>
    </location>
    <ligand>
        <name>substrate</name>
    </ligand>
</feature>
<feature type="binding site" evidence="1">
    <location>
        <begin position="67"/>
        <end position="72"/>
    </location>
    <ligand>
        <name>FMN</name>
        <dbReference type="ChEBI" id="CHEBI:58210"/>
    </ligand>
</feature>
<feature type="binding site" evidence="1">
    <location>
        <position position="72"/>
    </location>
    <ligand>
        <name>substrate</name>
    </ligand>
</feature>
<feature type="binding site" evidence="1">
    <location>
        <begin position="82"/>
        <end position="83"/>
    </location>
    <ligand>
        <name>FMN</name>
        <dbReference type="ChEBI" id="CHEBI:58210"/>
    </ligand>
</feature>
<feature type="binding site" evidence="1">
    <location>
        <position position="88"/>
    </location>
    <ligand>
        <name>FMN</name>
        <dbReference type="ChEBI" id="CHEBI:58210"/>
    </ligand>
</feature>
<feature type="binding site" evidence="1">
    <location>
        <position position="89"/>
    </location>
    <ligand>
        <name>FMN</name>
        <dbReference type="ChEBI" id="CHEBI:58210"/>
    </ligand>
</feature>
<feature type="binding site" evidence="1">
    <location>
        <position position="111"/>
    </location>
    <ligand>
        <name>FMN</name>
        <dbReference type="ChEBI" id="CHEBI:58210"/>
    </ligand>
</feature>
<feature type="binding site" evidence="1">
    <location>
        <position position="129"/>
    </location>
    <ligand>
        <name>substrate</name>
    </ligand>
</feature>
<feature type="binding site" evidence="1">
    <location>
        <position position="133"/>
    </location>
    <ligand>
        <name>substrate</name>
    </ligand>
</feature>
<feature type="binding site" evidence="1">
    <location>
        <position position="137"/>
    </location>
    <ligand>
        <name>substrate</name>
    </ligand>
</feature>
<feature type="binding site" evidence="1">
    <location>
        <begin position="146"/>
        <end position="147"/>
    </location>
    <ligand>
        <name>FMN</name>
        <dbReference type="ChEBI" id="CHEBI:58210"/>
    </ligand>
</feature>
<feature type="binding site" evidence="1">
    <location>
        <position position="191"/>
    </location>
    <ligand>
        <name>FMN</name>
        <dbReference type="ChEBI" id="CHEBI:58210"/>
    </ligand>
</feature>
<feature type="binding site" evidence="1">
    <location>
        <begin position="197"/>
        <end position="199"/>
    </location>
    <ligand>
        <name>substrate</name>
    </ligand>
</feature>
<feature type="binding site" evidence="1">
    <location>
        <position position="201"/>
    </location>
    <ligand>
        <name>FMN</name>
        <dbReference type="ChEBI" id="CHEBI:58210"/>
    </ligand>
</feature>
<dbReference type="EC" id="1.4.3.5" evidence="1"/>
<dbReference type="EMBL" id="CU928163">
    <property type="protein sequence ID" value="CAR13126.1"/>
    <property type="molecule type" value="Genomic_DNA"/>
</dbReference>
<dbReference type="RefSeq" id="WP_001282319.1">
    <property type="nucleotide sequence ID" value="NC_011751.1"/>
</dbReference>
<dbReference type="RefSeq" id="YP_002412658.1">
    <property type="nucleotide sequence ID" value="NC_011751.1"/>
</dbReference>
<dbReference type="SMR" id="B7NB92"/>
<dbReference type="STRING" id="585056.ECUMN_1929"/>
<dbReference type="GeneID" id="75171699"/>
<dbReference type="KEGG" id="eum:ECUMN_1929"/>
<dbReference type="PATRIC" id="fig|585056.7.peg.2112"/>
<dbReference type="HOGENOM" id="CLU_032263_2_2_6"/>
<dbReference type="UniPathway" id="UPA01068">
    <property type="reaction ID" value="UER00304"/>
</dbReference>
<dbReference type="UniPathway" id="UPA01068">
    <property type="reaction ID" value="UER00305"/>
</dbReference>
<dbReference type="Proteomes" id="UP000007097">
    <property type="component" value="Chromosome"/>
</dbReference>
<dbReference type="GO" id="GO:0010181">
    <property type="term" value="F:FMN binding"/>
    <property type="evidence" value="ECO:0007669"/>
    <property type="project" value="UniProtKB-UniRule"/>
</dbReference>
<dbReference type="GO" id="GO:0004733">
    <property type="term" value="F:pyridoxamine phosphate oxidase activity"/>
    <property type="evidence" value="ECO:0007669"/>
    <property type="project" value="UniProtKB-UniRule"/>
</dbReference>
<dbReference type="GO" id="GO:0008615">
    <property type="term" value="P:pyridoxine biosynthetic process"/>
    <property type="evidence" value="ECO:0007669"/>
    <property type="project" value="UniProtKB-KW"/>
</dbReference>
<dbReference type="FunFam" id="2.30.110.10:FF:000001">
    <property type="entry name" value="Pyridoxine/pyridoxamine 5'-phosphate oxidase"/>
    <property type="match status" value="1"/>
</dbReference>
<dbReference type="Gene3D" id="2.30.110.10">
    <property type="entry name" value="Electron Transport, Fmn-binding Protein, Chain A"/>
    <property type="match status" value="1"/>
</dbReference>
<dbReference type="HAMAP" id="MF_01629">
    <property type="entry name" value="PdxH"/>
    <property type="match status" value="1"/>
</dbReference>
<dbReference type="InterPro" id="IPR000659">
    <property type="entry name" value="Pyridox_Oxase"/>
</dbReference>
<dbReference type="InterPro" id="IPR019740">
    <property type="entry name" value="Pyridox_Oxase_CS"/>
</dbReference>
<dbReference type="InterPro" id="IPR011576">
    <property type="entry name" value="Pyridox_Oxase_N"/>
</dbReference>
<dbReference type="InterPro" id="IPR019576">
    <property type="entry name" value="Pyridoxamine_oxidase_dimer_C"/>
</dbReference>
<dbReference type="InterPro" id="IPR012349">
    <property type="entry name" value="Split_barrel_FMN-bd"/>
</dbReference>
<dbReference type="NCBIfam" id="TIGR00558">
    <property type="entry name" value="pdxH"/>
    <property type="match status" value="1"/>
</dbReference>
<dbReference type="NCBIfam" id="NF004231">
    <property type="entry name" value="PRK05679.1"/>
    <property type="match status" value="1"/>
</dbReference>
<dbReference type="PANTHER" id="PTHR10851:SF0">
    <property type="entry name" value="PYRIDOXINE-5'-PHOSPHATE OXIDASE"/>
    <property type="match status" value="1"/>
</dbReference>
<dbReference type="PANTHER" id="PTHR10851">
    <property type="entry name" value="PYRIDOXINE-5-PHOSPHATE OXIDASE"/>
    <property type="match status" value="1"/>
</dbReference>
<dbReference type="Pfam" id="PF10590">
    <property type="entry name" value="PNP_phzG_C"/>
    <property type="match status" value="1"/>
</dbReference>
<dbReference type="Pfam" id="PF01243">
    <property type="entry name" value="PNPOx_N"/>
    <property type="match status" value="1"/>
</dbReference>
<dbReference type="PIRSF" id="PIRSF000190">
    <property type="entry name" value="Pyd_amn-ph_oxd"/>
    <property type="match status" value="1"/>
</dbReference>
<dbReference type="SUPFAM" id="SSF50475">
    <property type="entry name" value="FMN-binding split barrel"/>
    <property type="match status" value="1"/>
</dbReference>
<dbReference type="PROSITE" id="PS01064">
    <property type="entry name" value="PYRIDOX_OXIDASE"/>
    <property type="match status" value="1"/>
</dbReference>
<reference key="1">
    <citation type="journal article" date="2009" name="PLoS Genet.">
        <title>Organised genome dynamics in the Escherichia coli species results in highly diverse adaptive paths.</title>
        <authorList>
            <person name="Touchon M."/>
            <person name="Hoede C."/>
            <person name="Tenaillon O."/>
            <person name="Barbe V."/>
            <person name="Baeriswyl S."/>
            <person name="Bidet P."/>
            <person name="Bingen E."/>
            <person name="Bonacorsi S."/>
            <person name="Bouchier C."/>
            <person name="Bouvet O."/>
            <person name="Calteau A."/>
            <person name="Chiapello H."/>
            <person name="Clermont O."/>
            <person name="Cruveiller S."/>
            <person name="Danchin A."/>
            <person name="Diard M."/>
            <person name="Dossat C."/>
            <person name="Karoui M.E."/>
            <person name="Frapy E."/>
            <person name="Garry L."/>
            <person name="Ghigo J.M."/>
            <person name="Gilles A.M."/>
            <person name="Johnson J."/>
            <person name="Le Bouguenec C."/>
            <person name="Lescat M."/>
            <person name="Mangenot S."/>
            <person name="Martinez-Jehanne V."/>
            <person name="Matic I."/>
            <person name="Nassif X."/>
            <person name="Oztas S."/>
            <person name="Petit M.A."/>
            <person name="Pichon C."/>
            <person name="Rouy Z."/>
            <person name="Ruf C.S."/>
            <person name="Schneider D."/>
            <person name="Tourret J."/>
            <person name="Vacherie B."/>
            <person name="Vallenet D."/>
            <person name="Medigue C."/>
            <person name="Rocha E.P.C."/>
            <person name="Denamur E."/>
        </authorList>
    </citation>
    <scope>NUCLEOTIDE SEQUENCE [LARGE SCALE GENOMIC DNA]</scope>
    <source>
        <strain>UMN026 / ExPEC</strain>
    </source>
</reference>
<comment type="function">
    <text evidence="1">Catalyzes the oxidation of either pyridoxine 5'-phosphate (PNP) or pyridoxamine 5'-phosphate (PMP) into pyridoxal 5'-phosphate (PLP).</text>
</comment>
<comment type="catalytic activity">
    <reaction evidence="1">
        <text>pyridoxamine 5'-phosphate + O2 + H2O = pyridoxal 5'-phosphate + H2O2 + NH4(+)</text>
        <dbReference type="Rhea" id="RHEA:15817"/>
        <dbReference type="ChEBI" id="CHEBI:15377"/>
        <dbReference type="ChEBI" id="CHEBI:15379"/>
        <dbReference type="ChEBI" id="CHEBI:16240"/>
        <dbReference type="ChEBI" id="CHEBI:28938"/>
        <dbReference type="ChEBI" id="CHEBI:58451"/>
        <dbReference type="ChEBI" id="CHEBI:597326"/>
        <dbReference type="EC" id="1.4.3.5"/>
    </reaction>
</comment>
<comment type="catalytic activity">
    <reaction evidence="1">
        <text>pyridoxine 5'-phosphate + O2 = pyridoxal 5'-phosphate + H2O2</text>
        <dbReference type="Rhea" id="RHEA:15149"/>
        <dbReference type="ChEBI" id="CHEBI:15379"/>
        <dbReference type="ChEBI" id="CHEBI:16240"/>
        <dbReference type="ChEBI" id="CHEBI:58589"/>
        <dbReference type="ChEBI" id="CHEBI:597326"/>
        <dbReference type="EC" id="1.4.3.5"/>
    </reaction>
</comment>
<comment type="cofactor">
    <cofactor evidence="1">
        <name>FMN</name>
        <dbReference type="ChEBI" id="CHEBI:58210"/>
    </cofactor>
    <text evidence="1">Binds 1 FMN per subunit.</text>
</comment>
<comment type="pathway">
    <text evidence="1">Cofactor metabolism; pyridoxal 5'-phosphate salvage; pyridoxal 5'-phosphate from pyridoxamine 5'-phosphate: step 1/1.</text>
</comment>
<comment type="pathway">
    <text evidence="1">Cofactor metabolism; pyridoxal 5'-phosphate salvage; pyridoxal 5'-phosphate from pyridoxine 5'-phosphate: step 1/1.</text>
</comment>
<comment type="subunit">
    <text evidence="1">Homodimer.</text>
</comment>
<comment type="similarity">
    <text evidence="1">Belongs to the pyridoxamine 5'-phosphate oxidase family.</text>
</comment>
<proteinExistence type="inferred from homology"/>
<evidence type="ECO:0000255" key="1">
    <source>
        <dbReference type="HAMAP-Rule" id="MF_01629"/>
    </source>
</evidence>
<name>PDXH_ECOLU</name>
<accession>B7NB92</accession>
<gene>
    <name evidence="1" type="primary">pdxH</name>
    <name type="ordered locus">ECUMN_1929</name>
</gene>
<protein>
    <recommendedName>
        <fullName evidence="1">Pyridoxine/pyridoxamine 5'-phosphate oxidase</fullName>
        <ecNumber evidence="1">1.4.3.5</ecNumber>
    </recommendedName>
    <alternativeName>
        <fullName evidence="1">PNP/PMP oxidase</fullName>
        <shortName evidence="1">PNPOx</shortName>
    </alternativeName>
    <alternativeName>
        <fullName evidence="1">Pyridoxal 5'-phosphate synthase</fullName>
    </alternativeName>
</protein>
<sequence length="218" mass="25545">MSDNDELQQIAHLRREYTKGGLRRRDLPADPLTLFERWLSQACEAKLADPTAMVVATVDEHGQPYQRIVLLKHYDEKGMVFYTNLGSRKAHQIENNPRVSLLFPWHTLERQVMVIGKAERLSTLEVMKYFHSRPRDSQIGAWVSKQSSRISARGILESKFLELKQKFQQGEVPLPSFWGGFRVSLEQIEFWQGGEHRLHDRFLYQRENDAWKIDRLAP</sequence>